<feature type="chain" id="PRO_0000143996" description="Protein S100-A9">
    <location>
        <begin position="1"/>
        <end position="156"/>
    </location>
</feature>
<feature type="domain" description="EF-hand 1" evidence="6">
    <location>
        <begin position="16"/>
        <end position="51"/>
    </location>
</feature>
<feature type="domain" description="EF-hand 2" evidence="4">
    <location>
        <begin position="54"/>
        <end position="89"/>
    </location>
</feature>
<feature type="region of interest" description="Disordered" evidence="5">
    <location>
        <begin position="94"/>
        <end position="156"/>
    </location>
</feature>
<feature type="compositionally biased region" description="Gly residues" evidence="5">
    <location>
        <begin position="108"/>
        <end position="119"/>
    </location>
</feature>
<feature type="compositionally biased region" description="Basic residues" evidence="5">
    <location>
        <begin position="135"/>
        <end position="156"/>
    </location>
</feature>
<feature type="binding site" evidence="1">
    <location>
        <position position="20"/>
    </location>
    <ligand>
        <name>Zn(2+)</name>
        <dbReference type="ChEBI" id="CHEBI:29105"/>
    </ligand>
</feature>
<feature type="binding site" evidence="1">
    <location>
        <position position="23"/>
    </location>
    <ligand>
        <name>Ca(2+)</name>
        <dbReference type="ChEBI" id="CHEBI:29108"/>
        <label>1</label>
    </ligand>
</feature>
<feature type="binding site" evidence="1">
    <location>
        <position position="26"/>
    </location>
    <ligand>
        <name>Ca(2+)</name>
        <dbReference type="ChEBI" id="CHEBI:29108"/>
        <label>1</label>
    </ligand>
</feature>
<feature type="binding site" evidence="1">
    <location>
        <position position="28"/>
    </location>
    <ligand>
        <name>Ca(2+)</name>
        <dbReference type="ChEBI" id="CHEBI:29108"/>
        <label>1</label>
    </ligand>
</feature>
<feature type="binding site" evidence="1">
    <location>
        <position position="30"/>
    </location>
    <ligand>
        <name>Zn(2+)</name>
        <dbReference type="ChEBI" id="CHEBI:29105"/>
    </ligand>
</feature>
<feature type="binding site" evidence="1">
    <location>
        <position position="31"/>
    </location>
    <ligand>
        <name>Ca(2+)</name>
        <dbReference type="ChEBI" id="CHEBI:29108"/>
        <label>1</label>
    </ligand>
</feature>
<feature type="binding site" evidence="1">
    <location>
        <position position="36"/>
    </location>
    <ligand>
        <name>Ca(2+)</name>
        <dbReference type="ChEBI" id="CHEBI:29108"/>
        <label>1</label>
    </ligand>
</feature>
<feature type="binding site" evidence="1">
    <location>
        <position position="67"/>
    </location>
    <ligand>
        <name>Ca(2+)</name>
        <dbReference type="ChEBI" id="CHEBI:29108"/>
        <label>2</label>
    </ligand>
</feature>
<feature type="binding site" evidence="1">
    <location>
        <position position="69"/>
    </location>
    <ligand>
        <name>Ca(2+)</name>
        <dbReference type="ChEBI" id="CHEBI:29108"/>
        <label>2</label>
    </ligand>
</feature>
<feature type="binding site" evidence="1">
    <location>
        <position position="71"/>
    </location>
    <ligand>
        <name>Ca(2+)</name>
        <dbReference type="ChEBI" id="CHEBI:29108"/>
        <label>2</label>
    </ligand>
</feature>
<feature type="binding site" evidence="1">
    <location>
        <position position="73"/>
    </location>
    <ligand>
        <name>Ca(2+)</name>
        <dbReference type="ChEBI" id="CHEBI:29108"/>
        <label>2</label>
    </ligand>
</feature>
<feature type="binding site" evidence="1">
    <location>
        <position position="78"/>
    </location>
    <ligand>
        <name>Ca(2+)</name>
        <dbReference type="ChEBI" id="CHEBI:29108"/>
        <label>2</label>
    </ligand>
</feature>
<feature type="binding site" evidence="1">
    <location>
        <position position="91"/>
    </location>
    <ligand>
        <name>Zn(2+)</name>
        <dbReference type="ChEBI" id="CHEBI:29105"/>
    </ligand>
</feature>
<feature type="binding site" evidence="1">
    <location>
        <position position="95"/>
    </location>
    <ligand>
        <name>Zn(2+)</name>
        <dbReference type="ChEBI" id="CHEBI:29105"/>
    </ligand>
</feature>
<feature type="modified residue" description="Pros-methylhistidine" evidence="3">
    <location>
        <position position="106"/>
    </location>
</feature>
<feature type="sequence conflict" description="In Ref. 1; AAI11627." evidence="6" ref="1">
    <location>
        <begin position="113"/>
        <end position="121"/>
    </location>
</feature>
<proteinExistence type="evidence at protein level"/>
<keyword id="KW-0929">Antimicrobial</keyword>
<keyword id="KW-0049">Antioxidant</keyword>
<keyword id="KW-0053">Apoptosis</keyword>
<keyword id="KW-0072">Autophagy</keyword>
<keyword id="KW-0106">Calcium</keyword>
<keyword id="KW-1003">Cell membrane</keyword>
<keyword id="KW-0145">Chemotaxis</keyword>
<keyword id="KW-0963">Cytoplasm</keyword>
<keyword id="KW-0206">Cytoskeleton</keyword>
<keyword id="KW-0903">Direct protein sequencing</keyword>
<keyword id="KW-0391">Immunity</keyword>
<keyword id="KW-0395">Inflammatory response</keyword>
<keyword id="KW-0399">Innate immunity</keyword>
<keyword id="KW-0472">Membrane</keyword>
<keyword id="KW-0479">Metal-binding</keyword>
<keyword id="KW-0488">Methylation</keyword>
<keyword id="KW-0597">Phosphoprotein</keyword>
<keyword id="KW-1185">Reference proteome</keyword>
<keyword id="KW-0677">Repeat</keyword>
<keyword id="KW-0964">Secreted</keyword>
<keyword id="KW-0862">Zinc</keyword>
<comment type="function">
    <text evidence="1">S100A9 is a calcium- and zinc-binding protein which plays a prominent role in the regulation of inflammatory processes and immune response. It can induce neutrophil chemotaxis, adhesion, can increase the bactericidal activity of neutrophils by promoting phagocytosis via activation of SYK, PI3K/AKT, and ERK1/2 and can induce degranulation of neutrophils by a MAPK-dependent mechanism. Predominantly found as calprotectin (S100A8/A9) which has a wide plethora of intra- and extracellular functions. The intracellular functions include: facilitating leukocyte arachidonic acid trafficking and metabolism, modulation of the tubulin-dependent cytoskeleton during migration of phagocytes and activation of the neutrophilic NADPH-oxidase. Also participates in regulatory T-cell differentiation together with CD69. Activates NADPH-oxidase by facilitating the enzyme complex assembly at the cell membrane, transferring arachidonic acid, an essential cofactor, to the enzyme complex and S100A8 contributes to the enzyme assembly by directly binding to NCF2/P67PHOX. The extracellular functions involve pro-inflammatory, antimicrobial, oxidant-scavenging and apoptosis-inducing activities. Its pro-inflammatory activity includes recruitment of leukocytes, promotion of cytokine and chemokine production, and regulation of leukocyte adhesion and migration. Acts as an alarmin or a danger associated molecular pattern (DAMP) molecule and stimulates innate immune cells via binding to pattern recognition receptors such as Toll-like receptor 4 (TLR4) and receptor for advanced glycation endproducts (AGER). Binding to TLR4 and AGER activates the MAP-kinase and NF-kappa-B signaling pathways resulting in the amplification of the pro-inflammatory cascade. Has antimicrobial activity towards bacteria and fungi and exerts its antimicrobial activity probably via chelation of Zn(2+) which is essential for microbial growth. Can induce cell death via autophagy and apoptosis and this occurs through the cross-talk of mitochondria and lysosomes via reactive oxygen species (ROS) and the process involves BNIP3. Can regulate neutrophil number and apoptosis by an anti-apoptotic effect; regulates cell survival via ITGAM/ITGB and TLR4 and a signaling mechanism involving MEK-ERK. Its role as an oxidant scavenger has a protective role in preventing exaggerated tissue damage by scavenging oxidants. The iNOS-S100A8/A9 transnitrosylase complex is proposed to direct selective inflammatory stimulus-dependent S-nitrosylation of multiple targets such as GAPDH, NXA5, EZR, MSN and VIM by recognizing a [IL]-x-C-x-x-[DE] motif.</text>
</comment>
<comment type="subunit">
    <text evidence="1 2">Homodimer. Preferentially exists as a heterodimer or heterotetramer with S100A8 known as calprotectin (S100A8/A9) (By similarity). S100A9 interacts with ATP2A2 (By similarity). S100A9 interacts with AGER, and with the heterodimeric complex formed by TLR4 and LY96 in the presence of calcium and/or zinc ions. S100A9 binds quinoline-3-carboxamides in the presence of calcium and/or zinc ions. S100A9 interacts with amyloid-beta protein 40. Calprotectin (S100A8/9) interacts with CEACAM3 and tubulin filaments in a calcium-dependent manner. Heterotetrameric calprotectin (S100A8/A9) interacts with ANXA6 and associates with tubulin filaments in activated monocytes. Calprotectin (S100A8/9) interacts with NCF2/P67PHOX, RAC1, RAC2, CYBA and CYBB. Calprotectin (S100A8/9) interacts with NOS2 to form the iNOS-S100A8/A9 transnitrosylase complex; induced by LDL(ox) (By similarity). Calprotectin (S100A8/9) interacts with CD69 (By similarity).</text>
</comment>
<comment type="subcellular location">
    <subcellularLocation>
        <location evidence="1">Secreted</location>
    </subcellularLocation>
    <subcellularLocation>
        <location evidence="1">Cytoplasm</location>
    </subcellularLocation>
    <subcellularLocation>
        <location evidence="1">Cytoplasm</location>
        <location evidence="1">Cytoskeleton</location>
    </subcellularLocation>
    <subcellularLocation>
        <location evidence="1">Cell membrane</location>
        <topology evidence="1">Peripheral membrane protein</topology>
    </subcellularLocation>
    <text evidence="1">Predominantly localized in the cytoplasm. Upon elevation of the intracellular calcium level, translocated from the cytoplasm to the cytoskeleton and the cell membrane. Upon neutrophil activation or endothelial adhesion of monocytes, is secreted via a microtubule-mediated, alternative pathway.</text>
</comment>
<comment type="tissue specificity">
    <text>Found essentially in phagocytic cells.</text>
</comment>
<comment type="PTM">
    <text evidence="1">Phosphorylated. Phosphorylation inhibits activation of tubulin polymerization.</text>
</comment>
<comment type="PTM">
    <text evidence="2">Methylation at His-106 by METTL9 reduces zinc-binding without affecting heterodimerization with S100A8.</text>
</comment>
<comment type="similarity">
    <text evidence="6">Belongs to the S-100 family.</text>
</comment>
<reference key="1">
    <citation type="submission" date="2006-01" db="EMBL/GenBank/DDBJ databases">
        <authorList>
            <consortium name="NIH - Mammalian Gene Collection (MGC) project"/>
        </authorList>
    </citation>
    <scope>NUCLEOTIDE SEQUENCE [LARGE SCALE MRNA]</scope>
    <source>
        <strain>Hereford</strain>
        <tissue>Testis</tissue>
    </source>
</reference>
<reference key="2">
    <citation type="journal article" date="1993" name="J. Cell Sci.">
        <title>Nuclear proteins of the bovine esophageal epithelium. I. Monoclonal antibody W2 specifically reacts with condensed nuclei of differentiated superficial cells.</title>
        <authorList>
            <person name="Tang T.K."/>
            <person name="Hong T.-M."/>
            <person name="Lin C.-Y."/>
            <person name="Lai M.-L."/>
            <person name="Liu C.H.L."/>
            <person name="Lo H.-J."/>
            <person name="Wang M.-E."/>
            <person name="Chen L.B."/>
            <person name="Chen W.-T."/>
            <person name="Ip W."/>
            <person name="Lin D.C."/>
            <person name="Lin J.J.-C."/>
            <person name="Lin S."/>
            <person name="Sun T.-T."/>
            <person name="Wang E."/>
            <person name="Wang J.L."/>
            <person name="Wu R."/>
            <person name="Wu C.-W."/>
            <person name="Chien S."/>
        </authorList>
    </citation>
    <scope>PROTEIN SEQUENCE OF 5-126</scope>
    <source>
        <tissue>Esophageal epithelium</tissue>
    </source>
</reference>
<reference key="3">
    <citation type="journal article" date="1992" name="Biochemistry">
        <title>The 23-kilodalton protein, a substrate of protein kinase C, in bovine neutrophil cytosol is a member of the S100 family.</title>
        <authorList>
            <person name="Dianoux A.-C."/>
            <person name="Stasia M.-J."/>
            <person name="Garin J."/>
            <person name="Gagnon J."/>
            <person name="Vignais P.V."/>
        </authorList>
    </citation>
    <scope>PROTEIN SEQUENCE OF 8-60</scope>
    <source>
        <tissue>Neutrophil</tissue>
    </source>
</reference>
<gene>
    <name type="primary">S100A9</name>
</gene>
<sequence>MEDKMSQMESSIETIINIFHQYSVRLGHYDTLIQKEFKQLVQKELPNFLKKQKKNEAAINEIMEDLDTNVDKQLSFEEFIMLVARLTVASHEEMHNTAPPGQGHRHGPGYGKGGSGSCSGQGSPDQGSHDLGSHGHGHGHSHGGHGHSHGGHGHSH</sequence>
<name>S10A9_BOVIN</name>
<protein>
    <recommendedName>
        <fullName>Protein S100-A9</fullName>
    </recommendedName>
    <alternativeName>
        <fullName>BEE22</fullName>
    </alternativeName>
    <alternativeName>
        <fullName>Calgranulin-B</fullName>
    </alternativeName>
    <alternativeName>
        <fullName>Neutrophil cytosolic 23 kDa protein</fullName>
        <shortName>p23</shortName>
    </alternativeName>
    <alternativeName>
        <fullName>S100 calcium-binding protein A9</fullName>
    </alternativeName>
</protein>
<dbReference type="EMBL" id="BC111626">
    <property type="protein sequence ID" value="AAI11627.1"/>
    <property type="molecule type" value="mRNA"/>
</dbReference>
<dbReference type="PIR" id="B22309">
    <property type="entry name" value="A42628"/>
</dbReference>
<dbReference type="RefSeq" id="NP_001039793.1">
    <property type="nucleotide sequence ID" value="NM_001046328.2"/>
</dbReference>
<dbReference type="SMR" id="P28783"/>
<dbReference type="BioGRID" id="189176">
    <property type="interactions" value="1"/>
</dbReference>
<dbReference type="FunCoup" id="P28783">
    <property type="interactions" value="165"/>
</dbReference>
<dbReference type="STRING" id="9913.ENSBTAP00000067294"/>
<dbReference type="TCDB" id="8.A.81.1.5">
    <property type="family name" value="the s100 calcium-binding protein (s100) family"/>
</dbReference>
<dbReference type="SwissPalm" id="P28783"/>
<dbReference type="PaxDb" id="9913-ENSBTAP00000008523"/>
<dbReference type="PeptideAtlas" id="P28783"/>
<dbReference type="GeneID" id="532569"/>
<dbReference type="KEGG" id="bta:532569"/>
<dbReference type="CTD" id="6280"/>
<dbReference type="eggNOG" id="ENOG502SA01">
    <property type="taxonomic scope" value="Eukaryota"/>
</dbReference>
<dbReference type="InParanoid" id="P28783"/>
<dbReference type="OrthoDB" id="9447434at2759"/>
<dbReference type="Proteomes" id="UP000009136">
    <property type="component" value="Unplaced"/>
</dbReference>
<dbReference type="GO" id="GO:0005737">
    <property type="term" value="C:cytoplasm"/>
    <property type="evidence" value="ECO:0000318"/>
    <property type="project" value="GO_Central"/>
</dbReference>
<dbReference type="GO" id="GO:0005856">
    <property type="term" value="C:cytoskeleton"/>
    <property type="evidence" value="ECO:0007669"/>
    <property type="project" value="UniProtKB-SubCell"/>
</dbReference>
<dbReference type="GO" id="GO:0005576">
    <property type="term" value="C:extracellular region"/>
    <property type="evidence" value="ECO:0007669"/>
    <property type="project" value="UniProtKB-SubCell"/>
</dbReference>
<dbReference type="GO" id="GO:0005886">
    <property type="term" value="C:plasma membrane"/>
    <property type="evidence" value="ECO:0007669"/>
    <property type="project" value="UniProtKB-SubCell"/>
</dbReference>
<dbReference type="GO" id="GO:0016209">
    <property type="term" value="F:antioxidant activity"/>
    <property type="evidence" value="ECO:0007669"/>
    <property type="project" value="UniProtKB-KW"/>
</dbReference>
<dbReference type="GO" id="GO:0005509">
    <property type="term" value="F:calcium ion binding"/>
    <property type="evidence" value="ECO:0000318"/>
    <property type="project" value="GO_Central"/>
</dbReference>
<dbReference type="GO" id="GO:0048306">
    <property type="term" value="F:calcium-dependent protein binding"/>
    <property type="evidence" value="ECO:0000318"/>
    <property type="project" value="GO_Central"/>
</dbReference>
<dbReference type="GO" id="GO:0061844">
    <property type="term" value="P:antimicrobial humoral immune response mediated by antimicrobial peptide"/>
    <property type="evidence" value="ECO:0000318"/>
    <property type="project" value="GO_Central"/>
</dbReference>
<dbReference type="GO" id="GO:0006915">
    <property type="term" value="P:apoptotic process"/>
    <property type="evidence" value="ECO:0007669"/>
    <property type="project" value="UniProtKB-KW"/>
</dbReference>
<dbReference type="GO" id="GO:0014002">
    <property type="term" value="P:astrocyte development"/>
    <property type="evidence" value="ECO:0000318"/>
    <property type="project" value="GO_Central"/>
</dbReference>
<dbReference type="GO" id="GO:0035425">
    <property type="term" value="P:autocrine signaling"/>
    <property type="evidence" value="ECO:0000318"/>
    <property type="project" value="GO_Central"/>
</dbReference>
<dbReference type="GO" id="GO:0006914">
    <property type="term" value="P:autophagy"/>
    <property type="evidence" value="ECO:0000250"/>
    <property type="project" value="UniProtKB"/>
</dbReference>
<dbReference type="GO" id="GO:0002544">
    <property type="term" value="P:chronic inflammatory response"/>
    <property type="evidence" value="ECO:0000318"/>
    <property type="project" value="GO_Central"/>
</dbReference>
<dbReference type="GO" id="GO:0043542">
    <property type="term" value="P:endothelial cell migration"/>
    <property type="evidence" value="ECO:0000318"/>
    <property type="project" value="GO_Central"/>
</dbReference>
<dbReference type="GO" id="GO:0045087">
    <property type="term" value="P:innate immune response"/>
    <property type="evidence" value="ECO:0007669"/>
    <property type="project" value="UniProtKB-KW"/>
</dbReference>
<dbReference type="GO" id="GO:0002523">
    <property type="term" value="P:leukocyte migration involved in inflammatory response"/>
    <property type="evidence" value="ECO:0000250"/>
    <property type="project" value="UniProtKB"/>
</dbReference>
<dbReference type="GO" id="GO:0070488">
    <property type="term" value="P:neutrophil aggregation"/>
    <property type="evidence" value="ECO:0000250"/>
    <property type="project" value="UniProtKB"/>
</dbReference>
<dbReference type="GO" id="GO:0030593">
    <property type="term" value="P:neutrophil chemotaxis"/>
    <property type="evidence" value="ECO:0000250"/>
    <property type="project" value="UniProtKB"/>
</dbReference>
<dbReference type="GO" id="GO:0050729">
    <property type="term" value="P:positive regulation of inflammatory response"/>
    <property type="evidence" value="ECO:0000250"/>
    <property type="project" value="UniProtKB"/>
</dbReference>
<dbReference type="GO" id="GO:2001244">
    <property type="term" value="P:positive regulation of intrinsic apoptotic signaling pathway"/>
    <property type="evidence" value="ECO:0000250"/>
    <property type="project" value="UniProtKB"/>
</dbReference>
<dbReference type="CDD" id="cd05030">
    <property type="entry name" value="calgranulins"/>
    <property type="match status" value="1"/>
</dbReference>
<dbReference type="FunFam" id="1.10.238.10:FF:000378">
    <property type="entry name" value="Protein S100-A9"/>
    <property type="match status" value="1"/>
</dbReference>
<dbReference type="Gene3D" id="1.10.238.10">
    <property type="entry name" value="EF-hand"/>
    <property type="match status" value="1"/>
</dbReference>
<dbReference type="InterPro" id="IPR011992">
    <property type="entry name" value="EF-hand-dom_pair"/>
</dbReference>
<dbReference type="InterPro" id="IPR002048">
    <property type="entry name" value="EF_hand_dom"/>
</dbReference>
<dbReference type="InterPro" id="IPR001751">
    <property type="entry name" value="S100/CaBP7/8-like_CS"/>
</dbReference>
<dbReference type="InterPro" id="IPR013787">
    <property type="entry name" value="S100_Ca-bd_sub"/>
</dbReference>
<dbReference type="PANTHER" id="PTHR11639:SF79">
    <property type="entry name" value="PROTEIN S100-A9"/>
    <property type="match status" value="1"/>
</dbReference>
<dbReference type="PANTHER" id="PTHR11639">
    <property type="entry name" value="S100 CALCIUM-BINDING PROTEIN"/>
    <property type="match status" value="1"/>
</dbReference>
<dbReference type="Pfam" id="PF01023">
    <property type="entry name" value="S_100"/>
    <property type="match status" value="1"/>
</dbReference>
<dbReference type="SMART" id="SM00054">
    <property type="entry name" value="EFh"/>
    <property type="match status" value="1"/>
</dbReference>
<dbReference type="SMART" id="SM01394">
    <property type="entry name" value="S_100"/>
    <property type="match status" value="1"/>
</dbReference>
<dbReference type="SUPFAM" id="SSF47473">
    <property type="entry name" value="EF-hand"/>
    <property type="match status" value="1"/>
</dbReference>
<dbReference type="PROSITE" id="PS50222">
    <property type="entry name" value="EF_HAND_2"/>
    <property type="match status" value="1"/>
</dbReference>
<dbReference type="PROSITE" id="PS00303">
    <property type="entry name" value="S100_CABP"/>
    <property type="match status" value="1"/>
</dbReference>
<organism>
    <name type="scientific">Bos taurus</name>
    <name type="common">Bovine</name>
    <dbReference type="NCBI Taxonomy" id="9913"/>
    <lineage>
        <taxon>Eukaryota</taxon>
        <taxon>Metazoa</taxon>
        <taxon>Chordata</taxon>
        <taxon>Craniata</taxon>
        <taxon>Vertebrata</taxon>
        <taxon>Euteleostomi</taxon>
        <taxon>Mammalia</taxon>
        <taxon>Eutheria</taxon>
        <taxon>Laurasiatheria</taxon>
        <taxon>Artiodactyla</taxon>
        <taxon>Ruminantia</taxon>
        <taxon>Pecora</taxon>
        <taxon>Bovidae</taxon>
        <taxon>Bovinae</taxon>
        <taxon>Bos</taxon>
    </lineage>
</organism>
<evidence type="ECO:0000250" key="1">
    <source>
        <dbReference type="UniProtKB" id="P06702"/>
    </source>
</evidence>
<evidence type="ECO:0000250" key="2">
    <source>
        <dbReference type="UniProtKB" id="P31725"/>
    </source>
</evidence>
<evidence type="ECO:0000250" key="3">
    <source>
        <dbReference type="UniProtKB" id="P50116"/>
    </source>
</evidence>
<evidence type="ECO:0000255" key="4">
    <source>
        <dbReference type="PROSITE-ProRule" id="PRU00448"/>
    </source>
</evidence>
<evidence type="ECO:0000256" key="5">
    <source>
        <dbReference type="SAM" id="MobiDB-lite"/>
    </source>
</evidence>
<evidence type="ECO:0000305" key="6"/>
<accession>P28783</accession>
<accession>Q2NKV0</accession>